<proteinExistence type="inferred from homology"/>
<sequence length="62" mass="6962">MSDKNIRITQVRSIIGCTKKQKATIKSLGLGRPNYQVEKPDNPCTRGQVKVVQHIVKVEELS</sequence>
<keyword id="KW-0687">Ribonucleoprotein</keyword>
<keyword id="KW-0689">Ribosomal protein</keyword>
<reference key="1">
    <citation type="submission" date="2008-06" db="EMBL/GenBank/DDBJ databases">
        <title>Complete sequence of chromosome of Prosthecochloris aestuarii DSM 271.</title>
        <authorList>
            <consortium name="US DOE Joint Genome Institute"/>
            <person name="Lucas S."/>
            <person name="Copeland A."/>
            <person name="Lapidus A."/>
            <person name="Glavina del Rio T."/>
            <person name="Dalin E."/>
            <person name="Tice H."/>
            <person name="Bruce D."/>
            <person name="Goodwin L."/>
            <person name="Pitluck S."/>
            <person name="Schmutz J."/>
            <person name="Larimer F."/>
            <person name="Land M."/>
            <person name="Hauser L."/>
            <person name="Kyrpides N."/>
            <person name="Anderson I."/>
            <person name="Liu Z."/>
            <person name="Li T."/>
            <person name="Zhao F."/>
            <person name="Overmann J."/>
            <person name="Bryant D.A."/>
            <person name="Richardson P."/>
        </authorList>
    </citation>
    <scope>NUCLEOTIDE SEQUENCE [LARGE SCALE GENOMIC DNA]</scope>
    <source>
        <strain>DSM 271 / SK 413</strain>
    </source>
</reference>
<dbReference type="EMBL" id="CP001108">
    <property type="protein sequence ID" value="ACF47056.1"/>
    <property type="molecule type" value="Genomic_DNA"/>
</dbReference>
<dbReference type="RefSeq" id="WP_012506588.1">
    <property type="nucleotide sequence ID" value="NC_011059.1"/>
</dbReference>
<dbReference type="SMR" id="B4S5B0"/>
<dbReference type="STRING" id="290512.Paes_2046"/>
<dbReference type="KEGG" id="paa:Paes_2046"/>
<dbReference type="eggNOG" id="COG1841">
    <property type="taxonomic scope" value="Bacteria"/>
</dbReference>
<dbReference type="HOGENOM" id="CLU_131047_2_0_10"/>
<dbReference type="Proteomes" id="UP000002725">
    <property type="component" value="Chromosome"/>
</dbReference>
<dbReference type="GO" id="GO:0022625">
    <property type="term" value="C:cytosolic large ribosomal subunit"/>
    <property type="evidence" value="ECO:0007669"/>
    <property type="project" value="TreeGrafter"/>
</dbReference>
<dbReference type="GO" id="GO:0003735">
    <property type="term" value="F:structural constituent of ribosome"/>
    <property type="evidence" value="ECO:0007669"/>
    <property type="project" value="InterPro"/>
</dbReference>
<dbReference type="GO" id="GO:0006412">
    <property type="term" value="P:translation"/>
    <property type="evidence" value="ECO:0007669"/>
    <property type="project" value="UniProtKB-UniRule"/>
</dbReference>
<dbReference type="CDD" id="cd01658">
    <property type="entry name" value="Ribosomal_L30"/>
    <property type="match status" value="1"/>
</dbReference>
<dbReference type="Gene3D" id="3.30.1390.20">
    <property type="entry name" value="Ribosomal protein L30, ferredoxin-like fold domain"/>
    <property type="match status" value="1"/>
</dbReference>
<dbReference type="HAMAP" id="MF_01371_B">
    <property type="entry name" value="Ribosomal_uL30_B"/>
    <property type="match status" value="1"/>
</dbReference>
<dbReference type="InterPro" id="IPR036919">
    <property type="entry name" value="Ribo_uL30_ferredoxin-like_sf"/>
</dbReference>
<dbReference type="InterPro" id="IPR005996">
    <property type="entry name" value="Ribosomal_uL30_bac-type"/>
</dbReference>
<dbReference type="InterPro" id="IPR016082">
    <property type="entry name" value="Ribosomal_uL30_ferredoxin-like"/>
</dbReference>
<dbReference type="NCBIfam" id="TIGR01308">
    <property type="entry name" value="rpmD_bact"/>
    <property type="match status" value="1"/>
</dbReference>
<dbReference type="PANTHER" id="PTHR15892:SF2">
    <property type="entry name" value="LARGE RIBOSOMAL SUBUNIT PROTEIN UL30M"/>
    <property type="match status" value="1"/>
</dbReference>
<dbReference type="PANTHER" id="PTHR15892">
    <property type="entry name" value="MITOCHONDRIAL RIBOSOMAL PROTEIN L30"/>
    <property type="match status" value="1"/>
</dbReference>
<dbReference type="Pfam" id="PF00327">
    <property type="entry name" value="Ribosomal_L30"/>
    <property type="match status" value="1"/>
</dbReference>
<dbReference type="PIRSF" id="PIRSF002211">
    <property type="entry name" value="Ribosomal_L30_bac-type"/>
    <property type="match status" value="1"/>
</dbReference>
<dbReference type="SUPFAM" id="SSF55129">
    <property type="entry name" value="Ribosomal protein L30p/L7e"/>
    <property type="match status" value="1"/>
</dbReference>
<protein>
    <recommendedName>
        <fullName evidence="1">Large ribosomal subunit protein uL30</fullName>
    </recommendedName>
    <alternativeName>
        <fullName evidence="2">50S ribosomal protein L30</fullName>
    </alternativeName>
</protein>
<name>RL30_PROA2</name>
<feature type="chain" id="PRO_1000144702" description="Large ribosomal subunit protein uL30">
    <location>
        <begin position="1"/>
        <end position="62"/>
    </location>
</feature>
<evidence type="ECO:0000255" key="1">
    <source>
        <dbReference type="HAMAP-Rule" id="MF_01371"/>
    </source>
</evidence>
<evidence type="ECO:0000305" key="2"/>
<organism>
    <name type="scientific">Prosthecochloris aestuarii (strain DSM 271 / SK 413)</name>
    <dbReference type="NCBI Taxonomy" id="290512"/>
    <lineage>
        <taxon>Bacteria</taxon>
        <taxon>Pseudomonadati</taxon>
        <taxon>Chlorobiota</taxon>
        <taxon>Chlorobiia</taxon>
        <taxon>Chlorobiales</taxon>
        <taxon>Chlorobiaceae</taxon>
        <taxon>Prosthecochloris</taxon>
    </lineage>
</organism>
<comment type="subunit">
    <text evidence="1">Part of the 50S ribosomal subunit.</text>
</comment>
<comment type="similarity">
    <text evidence="1">Belongs to the universal ribosomal protein uL30 family.</text>
</comment>
<accession>B4S5B0</accession>
<gene>
    <name evidence="1" type="primary">rpmD</name>
    <name type="ordered locus">Paes_2046</name>
</gene>